<protein>
    <recommendedName>
        <fullName>Fasciculation and elongation protein zeta-2</fullName>
    </recommendedName>
    <alternativeName>
        <fullName>Zygin II</fullName>
    </alternativeName>
    <alternativeName>
        <fullName>Zygin-2</fullName>
    </alternativeName>
</protein>
<dbReference type="EMBL" id="AB076184">
    <property type="protein sequence ID" value="BAD06207.1"/>
    <property type="molecule type" value="mRNA"/>
</dbReference>
<dbReference type="EMBL" id="AC007401">
    <property type="protein sequence ID" value="AAY14650.1"/>
    <property type="molecule type" value="Genomic_DNA"/>
</dbReference>
<dbReference type="EMBL" id="BC089390">
    <property type="protein sequence ID" value="AAH89390.1"/>
    <property type="molecule type" value="mRNA"/>
</dbReference>
<dbReference type="EMBL" id="AF113124">
    <property type="protein sequence ID" value="AAF14865.1"/>
    <property type="status" value="ALT_FRAME"/>
    <property type="molecule type" value="mRNA"/>
</dbReference>
<dbReference type="EMBL" id="U69140">
    <property type="protein sequence ID" value="AAB40661.1"/>
    <property type="molecule type" value="mRNA"/>
</dbReference>
<dbReference type="EMBL" id="U60061">
    <property type="protein sequence ID" value="AAC51283.1"/>
    <property type="molecule type" value="mRNA"/>
</dbReference>
<dbReference type="CCDS" id="CCDS46257.1">
    <molecule id="Q9UHY8-1"/>
</dbReference>
<dbReference type="CCDS" id="CCDS46258.1">
    <molecule id="Q9UHY8-2"/>
</dbReference>
<dbReference type="RefSeq" id="NP_001036013.1">
    <molecule id="Q9UHY8-2"/>
    <property type="nucleotide sequence ID" value="NM_001042548.2"/>
</dbReference>
<dbReference type="RefSeq" id="NP_005093.2">
    <molecule id="Q9UHY8-1"/>
    <property type="nucleotide sequence ID" value="NM_005102.3"/>
</dbReference>
<dbReference type="SMR" id="Q9UHY8"/>
<dbReference type="BioGRID" id="114996">
    <property type="interactions" value="35"/>
</dbReference>
<dbReference type="FunCoup" id="Q9UHY8">
    <property type="interactions" value="899"/>
</dbReference>
<dbReference type="IntAct" id="Q9UHY8">
    <property type="interactions" value="31"/>
</dbReference>
<dbReference type="MINT" id="Q9UHY8"/>
<dbReference type="STRING" id="9606.ENSP00000368547"/>
<dbReference type="GlyGen" id="Q9UHY8">
    <property type="glycosylation" value="2 sites, 1 N-linked glycan (1 site), 1 O-linked glycan (1 site)"/>
</dbReference>
<dbReference type="iPTMnet" id="Q9UHY8"/>
<dbReference type="PhosphoSitePlus" id="Q9UHY8"/>
<dbReference type="BioMuta" id="FEZ2"/>
<dbReference type="DMDM" id="76803658"/>
<dbReference type="jPOST" id="Q9UHY8"/>
<dbReference type="MassIVE" id="Q9UHY8"/>
<dbReference type="PaxDb" id="9606-ENSP00000368547"/>
<dbReference type="PeptideAtlas" id="Q9UHY8"/>
<dbReference type="ProteomicsDB" id="84442">
    <molecule id="Q9UHY8-1"/>
</dbReference>
<dbReference type="ProteomicsDB" id="84443">
    <molecule id="Q9UHY8-2"/>
</dbReference>
<dbReference type="Pumba" id="Q9UHY8"/>
<dbReference type="Antibodypedia" id="29294">
    <property type="antibodies" value="168 antibodies from 27 providers"/>
</dbReference>
<dbReference type="DNASU" id="9637"/>
<dbReference type="Ensembl" id="ENST00000379245.8">
    <molecule id="Q9UHY8-2"/>
    <property type="protein sequence ID" value="ENSP00000368547.4"/>
    <property type="gene ID" value="ENSG00000171055.15"/>
</dbReference>
<dbReference type="Ensembl" id="ENST00000405912.8">
    <molecule id="Q9UHY8-1"/>
    <property type="protein sequence ID" value="ENSP00000385112.3"/>
    <property type="gene ID" value="ENSG00000171055.15"/>
</dbReference>
<dbReference type="GeneID" id="9637"/>
<dbReference type="KEGG" id="hsa:9637"/>
<dbReference type="MANE-Select" id="ENST00000405912.8">
    <property type="protein sequence ID" value="ENSP00000385112.3"/>
    <property type="RefSeq nucleotide sequence ID" value="NM_005102.3"/>
    <property type="RefSeq protein sequence ID" value="NP_005093.2"/>
</dbReference>
<dbReference type="UCSC" id="uc002rpg.3">
    <molecule id="Q9UHY8-1"/>
    <property type="organism name" value="human"/>
</dbReference>
<dbReference type="AGR" id="HGNC:3660"/>
<dbReference type="CTD" id="9637"/>
<dbReference type="DisGeNET" id="9637"/>
<dbReference type="GeneCards" id="FEZ2"/>
<dbReference type="HGNC" id="HGNC:3660">
    <property type="gene designation" value="FEZ2"/>
</dbReference>
<dbReference type="HPA" id="ENSG00000171055">
    <property type="expression patterns" value="Low tissue specificity"/>
</dbReference>
<dbReference type="MIM" id="604826">
    <property type="type" value="gene"/>
</dbReference>
<dbReference type="neXtProt" id="NX_Q9UHY8"/>
<dbReference type="OpenTargets" id="ENSG00000171055"/>
<dbReference type="PharmGKB" id="PA28101"/>
<dbReference type="VEuPathDB" id="HostDB:ENSG00000171055"/>
<dbReference type="eggNOG" id="KOG3919">
    <property type="taxonomic scope" value="Eukaryota"/>
</dbReference>
<dbReference type="GeneTree" id="ENSGT00390000017627"/>
<dbReference type="InParanoid" id="Q9UHY8"/>
<dbReference type="OMA" id="YILKGTH"/>
<dbReference type="OrthoDB" id="7959977at2759"/>
<dbReference type="PAN-GO" id="Q9UHY8">
    <property type="GO annotations" value="2 GO annotations based on evolutionary models"/>
</dbReference>
<dbReference type="PhylomeDB" id="Q9UHY8"/>
<dbReference type="TreeFam" id="TF313128"/>
<dbReference type="PathwayCommons" id="Q9UHY8"/>
<dbReference type="SignaLink" id="Q9UHY8"/>
<dbReference type="BioGRID-ORCS" id="9637">
    <property type="hits" value="11 hits in 1162 CRISPR screens"/>
</dbReference>
<dbReference type="ChiTaRS" id="FEZ2">
    <property type="organism name" value="human"/>
</dbReference>
<dbReference type="GeneWiki" id="FEZ2"/>
<dbReference type="GenomeRNAi" id="9637"/>
<dbReference type="Pharos" id="Q9UHY8">
    <property type="development level" value="Tbio"/>
</dbReference>
<dbReference type="PRO" id="PR:Q9UHY8"/>
<dbReference type="Proteomes" id="UP000005640">
    <property type="component" value="Chromosome 2"/>
</dbReference>
<dbReference type="RNAct" id="Q9UHY8">
    <property type="molecule type" value="protein"/>
</dbReference>
<dbReference type="Bgee" id="ENSG00000171055">
    <property type="expression patterns" value="Expressed in endothelial cell and 219 other cell types or tissues"/>
</dbReference>
<dbReference type="ExpressionAtlas" id="Q9UHY8">
    <property type="expression patterns" value="baseline and differential"/>
</dbReference>
<dbReference type="GO" id="GO:0030424">
    <property type="term" value="C:axon"/>
    <property type="evidence" value="ECO:0000318"/>
    <property type="project" value="GO_Central"/>
</dbReference>
<dbReference type="GO" id="GO:0005737">
    <property type="term" value="C:cytoplasm"/>
    <property type="evidence" value="ECO:0000318"/>
    <property type="project" value="GO_Central"/>
</dbReference>
<dbReference type="GO" id="GO:0007411">
    <property type="term" value="P:axon guidance"/>
    <property type="evidence" value="ECO:0000304"/>
    <property type="project" value="ProtInc"/>
</dbReference>
<dbReference type="GO" id="GO:1902902">
    <property type="term" value="P:negative regulation of autophagosome assembly"/>
    <property type="evidence" value="ECO:0000315"/>
    <property type="project" value="GO_Central"/>
</dbReference>
<dbReference type="GO" id="GO:0007399">
    <property type="term" value="P:nervous system development"/>
    <property type="evidence" value="ECO:0000304"/>
    <property type="project" value="ProtInc"/>
</dbReference>
<dbReference type="GO" id="GO:0007165">
    <property type="term" value="P:signal transduction"/>
    <property type="evidence" value="ECO:0000304"/>
    <property type="project" value="ProtInc"/>
</dbReference>
<dbReference type="InterPro" id="IPR011680">
    <property type="entry name" value="FEZ"/>
</dbReference>
<dbReference type="PANTHER" id="PTHR12394:SF11">
    <property type="entry name" value="FASCICULATION AND ELONGATION PROTEIN ZETA-2"/>
    <property type="match status" value="1"/>
</dbReference>
<dbReference type="PANTHER" id="PTHR12394">
    <property type="entry name" value="ZYGIN"/>
    <property type="match status" value="1"/>
</dbReference>
<dbReference type="Pfam" id="PF07763">
    <property type="entry name" value="FEZ"/>
    <property type="match status" value="1"/>
</dbReference>
<keyword id="KW-0025">Alternative splicing</keyword>
<keyword id="KW-0175">Coiled coil</keyword>
<keyword id="KW-1015">Disulfide bond</keyword>
<keyword id="KW-0597">Phosphoprotein</keyword>
<keyword id="KW-1267">Proteomics identification</keyword>
<keyword id="KW-1185">Reference proteome</keyword>
<name>FEZ2_HUMAN</name>
<proteinExistence type="evidence at protein level"/>
<organism>
    <name type="scientific">Homo sapiens</name>
    <name type="common">Human</name>
    <dbReference type="NCBI Taxonomy" id="9606"/>
    <lineage>
        <taxon>Eukaryota</taxon>
        <taxon>Metazoa</taxon>
        <taxon>Chordata</taxon>
        <taxon>Craniata</taxon>
        <taxon>Vertebrata</taxon>
        <taxon>Euteleostomi</taxon>
        <taxon>Mammalia</taxon>
        <taxon>Eutheria</taxon>
        <taxon>Euarchontoglires</taxon>
        <taxon>Primates</taxon>
        <taxon>Haplorrhini</taxon>
        <taxon>Catarrhini</taxon>
        <taxon>Hominidae</taxon>
        <taxon>Homo</taxon>
    </lineage>
</organism>
<reference key="1">
    <citation type="journal article" date="2004" name="Biochem. Biophys. Res. Commun.">
        <title>Identification of a tissue-non-specific homologue of axonal fasciculation and elongation protein zeta-1.</title>
        <authorList>
            <person name="Fujita T."/>
            <person name="Ikuta J."/>
            <person name="Hamada J."/>
            <person name="Okajima T."/>
            <person name="Tatematsu K."/>
            <person name="Tanizawa K."/>
            <person name="Kuroda S."/>
        </authorList>
    </citation>
    <scope>NUCLEOTIDE SEQUENCE [MRNA] (ISOFORM 1)</scope>
</reference>
<reference key="2">
    <citation type="journal article" date="2005" name="Nature">
        <title>Generation and annotation of the DNA sequences of human chromosomes 2 and 4.</title>
        <authorList>
            <person name="Hillier L.W."/>
            <person name="Graves T.A."/>
            <person name="Fulton R.S."/>
            <person name="Fulton L.A."/>
            <person name="Pepin K.H."/>
            <person name="Minx P."/>
            <person name="Wagner-McPherson C."/>
            <person name="Layman D."/>
            <person name="Wylie K."/>
            <person name="Sekhon M."/>
            <person name="Becker M.C."/>
            <person name="Fewell G.A."/>
            <person name="Delehaunty K.D."/>
            <person name="Miner T.L."/>
            <person name="Nash W.E."/>
            <person name="Kremitzki C."/>
            <person name="Oddy L."/>
            <person name="Du H."/>
            <person name="Sun H."/>
            <person name="Bradshaw-Cordum H."/>
            <person name="Ali J."/>
            <person name="Carter J."/>
            <person name="Cordes M."/>
            <person name="Harris A."/>
            <person name="Isak A."/>
            <person name="van Brunt A."/>
            <person name="Nguyen C."/>
            <person name="Du F."/>
            <person name="Courtney L."/>
            <person name="Kalicki J."/>
            <person name="Ozersky P."/>
            <person name="Abbott S."/>
            <person name="Armstrong J."/>
            <person name="Belter E.A."/>
            <person name="Caruso L."/>
            <person name="Cedroni M."/>
            <person name="Cotton M."/>
            <person name="Davidson T."/>
            <person name="Desai A."/>
            <person name="Elliott G."/>
            <person name="Erb T."/>
            <person name="Fronick C."/>
            <person name="Gaige T."/>
            <person name="Haakenson W."/>
            <person name="Haglund K."/>
            <person name="Holmes A."/>
            <person name="Harkins R."/>
            <person name="Kim K."/>
            <person name="Kruchowski S.S."/>
            <person name="Strong C.M."/>
            <person name="Grewal N."/>
            <person name="Goyea E."/>
            <person name="Hou S."/>
            <person name="Levy A."/>
            <person name="Martinka S."/>
            <person name="Mead K."/>
            <person name="McLellan M.D."/>
            <person name="Meyer R."/>
            <person name="Randall-Maher J."/>
            <person name="Tomlinson C."/>
            <person name="Dauphin-Kohlberg S."/>
            <person name="Kozlowicz-Reilly A."/>
            <person name="Shah N."/>
            <person name="Swearengen-Shahid S."/>
            <person name="Snider J."/>
            <person name="Strong J.T."/>
            <person name="Thompson J."/>
            <person name="Yoakum M."/>
            <person name="Leonard S."/>
            <person name="Pearman C."/>
            <person name="Trani L."/>
            <person name="Radionenko M."/>
            <person name="Waligorski J.E."/>
            <person name="Wang C."/>
            <person name="Rock S.M."/>
            <person name="Tin-Wollam A.-M."/>
            <person name="Maupin R."/>
            <person name="Latreille P."/>
            <person name="Wendl M.C."/>
            <person name="Yang S.-P."/>
            <person name="Pohl C."/>
            <person name="Wallis J.W."/>
            <person name="Spieth J."/>
            <person name="Bieri T.A."/>
            <person name="Berkowicz N."/>
            <person name="Nelson J.O."/>
            <person name="Osborne J."/>
            <person name="Ding L."/>
            <person name="Meyer R."/>
            <person name="Sabo A."/>
            <person name="Shotland Y."/>
            <person name="Sinha P."/>
            <person name="Wohldmann P.E."/>
            <person name="Cook L.L."/>
            <person name="Hickenbotham M.T."/>
            <person name="Eldred J."/>
            <person name="Williams D."/>
            <person name="Jones T.A."/>
            <person name="She X."/>
            <person name="Ciccarelli F.D."/>
            <person name="Izaurralde E."/>
            <person name="Taylor J."/>
            <person name="Schmutz J."/>
            <person name="Myers R.M."/>
            <person name="Cox D.R."/>
            <person name="Huang X."/>
            <person name="McPherson J.D."/>
            <person name="Mardis E.R."/>
            <person name="Clifton S.W."/>
            <person name="Warren W.C."/>
            <person name="Chinwalla A.T."/>
            <person name="Eddy S.R."/>
            <person name="Marra M.A."/>
            <person name="Ovcharenko I."/>
            <person name="Furey T.S."/>
            <person name="Miller W."/>
            <person name="Eichler E.E."/>
            <person name="Bork P."/>
            <person name="Suyama M."/>
            <person name="Torrents D."/>
            <person name="Waterston R.H."/>
            <person name="Wilson R.K."/>
        </authorList>
    </citation>
    <scope>NUCLEOTIDE SEQUENCE [LARGE SCALE GENOMIC DNA]</scope>
</reference>
<reference key="3">
    <citation type="journal article" date="2004" name="Genome Res.">
        <title>The status, quality, and expansion of the NIH full-length cDNA project: the Mammalian Gene Collection (MGC).</title>
        <authorList>
            <consortium name="The MGC Project Team"/>
        </authorList>
    </citation>
    <scope>NUCLEOTIDE SEQUENCE [LARGE SCALE MRNA] OF 4-353 (ISOFORM 2)</scope>
    <source>
        <tissue>Testis</tissue>
    </source>
</reference>
<reference key="4">
    <citation type="journal article" date="2000" name="Proc. Natl. Acad. Sci. U.S.A.">
        <title>Gene expression profiling in the human hypothalamus-pituitary-adrenal axis and full-length cDNA cloning.</title>
        <authorList>
            <person name="Hu R.-M."/>
            <person name="Han Z.-G."/>
            <person name="Song H.-D."/>
            <person name="Peng Y.-D."/>
            <person name="Huang Q.-H."/>
            <person name="Ren S.-X."/>
            <person name="Gu Y.-J."/>
            <person name="Huang C.-H."/>
            <person name="Li Y.-B."/>
            <person name="Jiang C.-L."/>
            <person name="Fu G."/>
            <person name="Zhang Q.-H."/>
            <person name="Gu B.-W."/>
            <person name="Dai M."/>
            <person name="Mao Y.-F."/>
            <person name="Gao G.-F."/>
            <person name="Rong R."/>
            <person name="Ye M."/>
            <person name="Zhou J."/>
            <person name="Xu S.-H."/>
            <person name="Gu J."/>
            <person name="Shi J.-X."/>
            <person name="Jin W.-R."/>
            <person name="Zhang C.-K."/>
            <person name="Wu T.-M."/>
            <person name="Huang G.-Y."/>
            <person name="Chen Z."/>
            <person name="Chen M.-D."/>
            <person name="Chen J.-L."/>
        </authorList>
    </citation>
    <scope>NUCLEOTIDE SEQUENCE [LARGE SCALE MRNA] OF 18-353 (ISOFORM 1)</scope>
    <scope>VARIANT LEU-50</scope>
    <source>
        <tissue>Adrenal gland</tissue>
    </source>
</reference>
<reference key="5">
    <citation type="submission" date="1996-08" db="EMBL/GenBank/DDBJ databases">
        <title>Zigins: a family of synaptotagmin-interacting proteins related to unc-76.</title>
        <authorList>
            <person name="Sugita S."/>
            <person name="von Poser C."/>
            <person name="Rosahl T.W."/>
            <person name="Hata Y."/>
            <person name="Suedhof T.C."/>
        </authorList>
    </citation>
    <scope>NUCLEOTIDE SEQUENCE [MRNA] OF 105-353 (ISOFORM 1)</scope>
</reference>
<reference key="6">
    <citation type="journal article" date="1997" name="Proc. Natl. Acad. Sci. U.S.A.">
        <title>The Caenorhabditis elegans gene unc-76 and its human homologs define a new gene family involved in axonal outgrowth and fasciculation.</title>
        <authorList>
            <person name="Bloom L."/>
            <person name="Horvitz H.R."/>
        </authorList>
    </citation>
    <scope>NUCLEOTIDE SEQUENCE [MRNA] OF 201-353 (ISOFORM 1)</scope>
</reference>
<reference key="7">
    <citation type="journal article" date="2006" name="J. Biol. Chem.">
        <title>FEZ1 dimerization and interaction with transcription regulatory proteins involves its coiled-coil region.</title>
        <authorList>
            <person name="Assmann E.M."/>
            <person name="Alborghetti M.R."/>
            <person name="Camargo M.E.R."/>
            <person name="Kobarg J."/>
        </authorList>
    </citation>
    <scope>SUBUNIT</scope>
</reference>
<reference key="8">
    <citation type="journal article" date="2010" name="J. Proteome Res.">
        <title>Human FEZ1 protein forms a disulfide bond mediated dimer: implications for cargo transport.</title>
        <authorList>
            <person name="Alborghetti M.R."/>
            <person name="Furlan A.S."/>
            <person name="Silva J.C."/>
            <person name="Paes Leme A.F."/>
            <person name="Torriani I.C."/>
            <person name="Kobarg J."/>
        </authorList>
    </citation>
    <scope>SUBUNIT</scope>
    <scope>DISULFIDE BOND</scope>
</reference>
<reference key="9">
    <citation type="journal article" date="2013" name="J. Proteome Res.">
        <title>Toward a comprehensive characterization of a human cancer cell phosphoproteome.</title>
        <authorList>
            <person name="Zhou H."/>
            <person name="Di Palma S."/>
            <person name="Preisinger C."/>
            <person name="Peng M."/>
            <person name="Polat A.N."/>
            <person name="Heck A.J."/>
            <person name="Mohammed S."/>
        </authorList>
    </citation>
    <scope>PHOSPHORYLATION [LARGE SCALE ANALYSIS] AT SER-195</scope>
    <scope>IDENTIFICATION BY MASS SPECTROMETRY [LARGE SCALE ANALYSIS]</scope>
    <source>
        <tissue>Erythroleukemia</tissue>
    </source>
</reference>
<reference key="10">
    <citation type="journal article" date="2014" name="J. Proteomics">
        <title>An enzyme assisted RP-RPLC approach for in-depth analysis of human liver phosphoproteome.</title>
        <authorList>
            <person name="Bian Y."/>
            <person name="Song C."/>
            <person name="Cheng K."/>
            <person name="Dong M."/>
            <person name="Wang F."/>
            <person name="Huang J."/>
            <person name="Sun D."/>
            <person name="Wang L."/>
            <person name="Ye M."/>
            <person name="Zou H."/>
        </authorList>
    </citation>
    <scope>PHOSPHORYLATION [LARGE SCALE ANALYSIS] AT SER-135 AND SER-176</scope>
    <scope>IDENTIFICATION BY MASS SPECTROMETRY [LARGE SCALE ANALYSIS]</scope>
    <source>
        <tissue>Liver</tissue>
    </source>
</reference>
<evidence type="ECO:0000250" key="1"/>
<evidence type="ECO:0000255" key="2"/>
<evidence type="ECO:0000256" key="3">
    <source>
        <dbReference type="SAM" id="MobiDB-lite"/>
    </source>
</evidence>
<evidence type="ECO:0000269" key="4">
    <source>
    </source>
</evidence>
<evidence type="ECO:0000269" key="5">
    <source>
    </source>
</evidence>
<evidence type="ECO:0000269" key="6">
    <source>
    </source>
</evidence>
<evidence type="ECO:0000303" key="7">
    <source>
    </source>
</evidence>
<evidence type="ECO:0000305" key="8"/>
<evidence type="ECO:0007744" key="9">
    <source>
    </source>
</evidence>
<evidence type="ECO:0007744" key="10">
    <source>
    </source>
</evidence>
<feature type="chain" id="PRO_0000189528" description="Fasciculation and elongation protein zeta-2">
    <location>
        <begin position="1"/>
        <end position="353"/>
    </location>
</feature>
<feature type="region of interest" description="Disordered" evidence="3">
    <location>
        <begin position="19"/>
        <end position="49"/>
    </location>
</feature>
<feature type="region of interest" description="Disordered" evidence="3">
    <location>
        <begin position="271"/>
        <end position="300"/>
    </location>
</feature>
<feature type="coiled-coil region" evidence="2">
    <location>
        <begin position="214"/>
        <end position="286"/>
    </location>
</feature>
<feature type="compositionally biased region" description="Low complexity" evidence="3">
    <location>
        <begin position="28"/>
        <end position="38"/>
    </location>
</feature>
<feature type="modified residue" description="Phosphoserine" evidence="10">
    <location>
        <position position="135"/>
    </location>
</feature>
<feature type="modified residue" description="Phosphoserine" evidence="10">
    <location>
        <position position="176"/>
    </location>
</feature>
<feature type="modified residue" description="Phosphoserine" evidence="9">
    <location>
        <position position="195"/>
    </location>
</feature>
<feature type="disulfide bond" description="Interchain" evidence="2">
    <location>
        <position position="153"/>
    </location>
</feature>
<feature type="splice variant" id="VSP_041368" description="In isoform 2." evidence="7">
    <original>T</original>
    <variation>TRFSMEGISNVIQNGLRHTFGNSGGEKQ</variation>
    <location>
        <position position="301"/>
    </location>
</feature>
<feature type="sequence variant" id="VAR_053771" description="In dbSNP:rs1544655." evidence="4">
    <original>P</original>
    <variation>L</variation>
    <location>
        <position position="50"/>
    </location>
</feature>
<feature type="sequence variant" id="VAR_053772" description="In dbSNP:rs848642.">
    <original>R</original>
    <variation>C</variation>
    <location>
        <position position="329"/>
    </location>
</feature>
<feature type="sequence conflict" description="In Ref. 4; AAF14865." evidence="8" ref="4">
    <original>GAEA</original>
    <variation>WAKG</variation>
    <location>
        <begin position="33"/>
        <end position="36"/>
    </location>
</feature>
<feature type="sequence conflict" description="In Ref. 4; AAF14865." evidence="8" ref="4">
    <original>A</original>
    <variation>T</variation>
    <location>
        <position position="40"/>
    </location>
</feature>
<feature type="sequence conflict" description="In Ref. 4; AAF14865." evidence="8" ref="4">
    <original>R</original>
    <variation>L</variation>
    <location>
        <position position="82"/>
    </location>
</feature>
<gene>
    <name type="primary">FEZ2</name>
</gene>
<sequence>MAADGDWQDFYEFQEPARSLLDQENCNASPEPGAEAGAEAGGGADGFPAPACSLEEKLSLCFRPSDPGAEPPRTAVRPITERSLLQGDEIWNALTDNYGNVMPVDWKSSHTRTLHLLTLNLSEKGVSDSLLFDTSDDEELREQLDMHSIIVSCVNDEPLFTADQVIEEIEEMMQESPDPEDDETPTQSDRLSMLSQEIQTLKRSSTGSYEERVKRLSVSELNEILEEIETAIKEYSEELVQQLALRDELEFEKEVKNSFISVLIEVQNKQKEHKETAKKKKKLKNGSSQNGKNERSHMPGTYLTTVIPYEKKNGPPSVEDLQILTKILRAMKEDSEKVPSLLTDYILKVLCPT</sequence>
<accession>Q9UHY8</accession>
<accession>Q5EBN3</accession>
<accession>Q76LN0</accession>
<accession>Q99690</accession>
<comment type="function">
    <text evidence="1">Involved in axonal outgrowth and fasciculation.</text>
</comment>
<comment type="subunit">
    <text evidence="5 6">Homodimer; disulfide-linked. May form heterodimers with FEZ1. Interacts with synaptotagmin.</text>
</comment>
<comment type="interaction">
    <interactant intactId="EBI-396453">
        <id>Q9UHY8</id>
    </interactant>
    <interactant intactId="EBI-17264467">
        <id>P05067-2</id>
        <label>APP</label>
    </interactant>
    <organismsDiffer>false</organismsDiffer>
    <experiments>3</experiments>
</comment>
<comment type="interaction">
    <interactant intactId="EBI-396453">
        <id>Q9UHY8</id>
    </interactant>
    <interactant intactId="EBI-930964">
        <id>P54253</id>
        <label>ATXN1</label>
    </interactant>
    <organismsDiffer>false</organismsDiffer>
    <experiments>6</experiments>
</comment>
<comment type="interaction">
    <interactant intactId="EBI-396453">
        <id>Q9UHY8</id>
    </interactant>
    <interactant intactId="EBI-946046">
        <id>P54252</id>
        <label>ATXN3</label>
    </interactant>
    <organismsDiffer>false</organismsDiffer>
    <experiments>6</experiments>
</comment>
<comment type="interaction">
    <interactant intactId="EBI-396453">
        <id>Q9UHY8</id>
    </interactant>
    <interactant intactId="EBI-25840379">
        <id>Q14203-5</id>
        <label>DCTN1</label>
    </interactant>
    <organismsDiffer>false</organismsDiffer>
    <experiments>3</experiments>
</comment>
<comment type="interaction">
    <interactant intactId="EBI-396453">
        <id>Q9UHY8</id>
    </interactant>
    <interactant intactId="EBI-10968534">
        <id>P50570-2</id>
        <label>DNM2</label>
    </interactant>
    <organismsDiffer>false</organismsDiffer>
    <experiments>3</experiments>
</comment>
<comment type="interaction">
    <interactant intactId="EBI-396453">
        <id>Q9UHY8</id>
    </interactant>
    <interactant intactId="EBI-466029">
        <id>P42858</id>
        <label>HTT</label>
    </interactant>
    <organismsDiffer>false</organismsDiffer>
    <experiments>18</experiments>
</comment>
<comment type="interaction">
    <interactant intactId="EBI-396453">
        <id>Q9UHY8</id>
    </interactant>
    <interactant intactId="EBI-10975473">
        <id>O60333-2</id>
        <label>KIF1B</label>
    </interactant>
    <organismsDiffer>false</organismsDiffer>
    <experiments>3</experiments>
</comment>
<comment type="interaction">
    <interactant intactId="EBI-396453">
        <id>Q9UHY8</id>
    </interactant>
    <interactant intactId="EBI-373615">
        <id>Q96PY6</id>
        <label>NEK1</label>
    </interactant>
    <organismsDiffer>false</organismsDiffer>
    <experiments>2</experiments>
</comment>
<comment type="interaction">
    <interactant intactId="EBI-396453">
        <id>Q9UHY8</id>
    </interactant>
    <interactant intactId="EBI-2846068">
        <id>Q9BXM7</id>
        <label>PINK1</label>
    </interactant>
    <organismsDiffer>false</organismsDiffer>
    <experiments>3</experiments>
</comment>
<comment type="interaction">
    <interactant intactId="EBI-396453">
        <id>Q9UHY8</id>
    </interactant>
    <interactant intactId="EBI-21251460">
        <id>O60260-5</id>
        <label>PRKN</label>
    </interactant>
    <organismsDiffer>false</organismsDiffer>
    <experiments>3</experiments>
</comment>
<comment type="interaction">
    <interactant intactId="EBI-396453">
        <id>Q9UHY8</id>
    </interactant>
    <interactant intactId="EBI-749195">
        <id>P60891</id>
        <label>PRPS1</label>
    </interactant>
    <organismsDiffer>false</organismsDiffer>
    <experiments>3</experiments>
</comment>
<comment type="interaction">
    <interactant intactId="EBI-396453">
        <id>Q9UHY8</id>
    </interactant>
    <interactant intactId="EBI-11047108">
        <id>P49768-2</id>
        <label>PSEN1</label>
    </interactant>
    <organismsDiffer>false</organismsDiffer>
    <experiments>3</experiments>
</comment>
<comment type="interaction">
    <interactant intactId="EBI-396453">
        <id>Q9UHY8</id>
    </interactant>
    <interactant intactId="EBI-10692913">
        <id>Q9UIL1-3</id>
        <label>SCOC</label>
    </interactant>
    <organismsDiffer>false</organismsDiffer>
    <experiments>3</experiments>
</comment>
<comment type="interaction">
    <interactant intactId="EBI-396453">
        <id>Q9UHY8</id>
    </interactant>
    <interactant intactId="EBI-395421">
        <id>Q16637</id>
        <label>SMN2</label>
    </interactant>
    <organismsDiffer>false</organismsDiffer>
    <experiments>3</experiments>
</comment>
<comment type="interaction">
    <interactant intactId="EBI-396453">
        <id>Q9UHY8</id>
    </interactant>
    <interactant intactId="EBI-985879">
        <id>P37840</id>
        <label>SNCA</label>
    </interactant>
    <organismsDiffer>false</organismsDiffer>
    <experiments>3</experiments>
</comment>
<comment type="interaction">
    <interactant intactId="EBI-396453">
        <id>Q9UHY8</id>
    </interactant>
    <interactant intactId="EBI-711909">
        <id>P02766</id>
        <label>TTR</label>
    </interactant>
    <organismsDiffer>false</organismsDiffer>
    <experiments>3</experiments>
</comment>
<comment type="interaction">
    <interactant intactId="EBI-396453">
        <id>Q9UHY8</id>
    </interactant>
    <interactant intactId="EBI-720609">
        <id>O76024</id>
        <label>WFS1</label>
    </interactant>
    <organismsDiffer>false</organismsDiffer>
    <experiments>3</experiments>
</comment>
<comment type="interaction">
    <interactant intactId="EBI-396453">
        <id>Q9UHY8</id>
    </interactant>
    <interactant intactId="EBI-524753">
        <id>Q8IUH5</id>
        <label>ZDHHC17</label>
    </interactant>
    <organismsDiffer>false</organismsDiffer>
    <experiments>4</experiments>
</comment>
<comment type="alternative products">
    <event type="alternative splicing"/>
    <isoform>
        <id>Q9UHY8-1</id>
        <name>1</name>
        <sequence type="displayed"/>
    </isoform>
    <isoform>
        <id>Q9UHY8-2</id>
        <name>2</name>
        <sequence type="described" ref="VSP_041368"/>
    </isoform>
</comment>
<comment type="tissue specificity">
    <text>Expressed in nonneural tissues, such as heart, lung, spleen, muscle, testis, placenta and melanocytes.</text>
</comment>
<comment type="similarity">
    <text evidence="8">Belongs to the zygin family.</text>
</comment>
<comment type="sequence caution" evidence="8">
    <conflict type="frameshift">
        <sequence resource="EMBL-CDS" id="AAF14865"/>
    </conflict>
</comment>